<accession>Q87VS1</accession>
<protein>
    <recommendedName>
        <fullName evidence="1">tRNA-dihydrouridine synthase B</fullName>
        <ecNumber evidence="1">1.3.1.-</ecNumber>
    </recommendedName>
</protein>
<name>DUSB_PSESM</name>
<dbReference type="EC" id="1.3.1.-" evidence="1"/>
<dbReference type="EMBL" id="AE016853">
    <property type="protein sequence ID" value="AAO58293.1"/>
    <property type="molecule type" value="Genomic_DNA"/>
</dbReference>
<dbReference type="RefSeq" id="NP_794598.1">
    <property type="nucleotide sequence ID" value="NC_004578.1"/>
</dbReference>
<dbReference type="RefSeq" id="WP_005763161.1">
    <property type="nucleotide sequence ID" value="NC_004578.1"/>
</dbReference>
<dbReference type="SMR" id="Q87VS1"/>
<dbReference type="STRING" id="223283.PSPTO_4864"/>
<dbReference type="GeneID" id="1186547"/>
<dbReference type="KEGG" id="pst:PSPTO_4864"/>
<dbReference type="PATRIC" id="fig|223283.9.peg.4976"/>
<dbReference type="eggNOG" id="COG0042">
    <property type="taxonomic scope" value="Bacteria"/>
</dbReference>
<dbReference type="HOGENOM" id="CLU_013299_0_1_6"/>
<dbReference type="OrthoDB" id="9764501at2"/>
<dbReference type="PhylomeDB" id="Q87VS1"/>
<dbReference type="Proteomes" id="UP000002515">
    <property type="component" value="Chromosome"/>
</dbReference>
<dbReference type="GO" id="GO:0050660">
    <property type="term" value="F:flavin adenine dinucleotide binding"/>
    <property type="evidence" value="ECO:0007669"/>
    <property type="project" value="InterPro"/>
</dbReference>
<dbReference type="GO" id="GO:0010181">
    <property type="term" value="F:FMN binding"/>
    <property type="evidence" value="ECO:0007669"/>
    <property type="project" value="UniProtKB-UniRule"/>
</dbReference>
<dbReference type="GO" id="GO:0000049">
    <property type="term" value="F:tRNA binding"/>
    <property type="evidence" value="ECO:0007669"/>
    <property type="project" value="UniProtKB-UniRule"/>
</dbReference>
<dbReference type="GO" id="GO:0017150">
    <property type="term" value="F:tRNA dihydrouridine synthase activity"/>
    <property type="evidence" value="ECO:0007669"/>
    <property type="project" value="UniProtKB-UniRule"/>
</dbReference>
<dbReference type="CDD" id="cd02801">
    <property type="entry name" value="DUS_like_FMN"/>
    <property type="match status" value="1"/>
</dbReference>
<dbReference type="Gene3D" id="3.20.20.70">
    <property type="entry name" value="Aldolase class I"/>
    <property type="match status" value="1"/>
</dbReference>
<dbReference type="Gene3D" id="1.10.1200.80">
    <property type="entry name" value="Putative flavin oxidoreducatase, domain 2"/>
    <property type="match status" value="1"/>
</dbReference>
<dbReference type="HAMAP" id="MF_02042">
    <property type="entry name" value="DusB_subfam"/>
    <property type="match status" value="1"/>
</dbReference>
<dbReference type="InterPro" id="IPR013785">
    <property type="entry name" value="Aldolase_TIM"/>
</dbReference>
<dbReference type="InterPro" id="IPR035587">
    <property type="entry name" value="DUS-like_FMN-bd"/>
</dbReference>
<dbReference type="InterPro" id="IPR001269">
    <property type="entry name" value="DUS_fam"/>
</dbReference>
<dbReference type="InterPro" id="IPR032887">
    <property type="entry name" value="DusB"/>
</dbReference>
<dbReference type="InterPro" id="IPR004652">
    <property type="entry name" value="DusB-like"/>
</dbReference>
<dbReference type="InterPro" id="IPR024036">
    <property type="entry name" value="tRNA-dHydroUridine_Synthase_C"/>
</dbReference>
<dbReference type="InterPro" id="IPR018517">
    <property type="entry name" value="tRNA_hU_synthase_CS"/>
</dbReference>
<dbReference type="NCBIfam" id="TIGR00737">
    <property type="entry name" value="nifR3_yhdG"/>
    <property type="match status" value="1"/>
</dbReference>
<dbReference type="PANTHER" id="PTHR45846">
    <property type="entry name" value="TRNA-DIHYDROURIDINE(47) SYNTHASE [NAD(P)(+)]-LIKE"/>
    <property type="match status" value="1"/>
</dbReference>
<dbReference type="PANTHER" id="PTHR45846:SF1">
    <property type="entry name" value="TRNA-DIHYDROURIDINE(47) SYNTHASE [NAD(P)(+)]-LIKE"/>
    <property type="match status" value="1"/>
</dbReference>
<dbReference type="Pfam" id="PF01207">
    <property type="entry name" value="Dus"/>
    <property type="match status" value="1"/>
</dbReference>
<dbReference type="PIRSF" id="PIRSF006621">
    <property type="entry name" value="Dus"/>
    <property type="match status" value="1"/>
</dbReference>
<dbReference type="SUPFAM" id="SSF51395">
    <property type="entry name" value="FMN-linked oxidoreductases"/>
    <property type="match status" value="1"/>
</dbReference>
<dbReference type="PROSITE" id="PS01136">
    <property type="entry name" value="UPF0034"/>
    <property type="match status" value="1"/>
</dbReference>
<sequence length="337" mass="36600">MSAVRIGPYTVHNGLILAPMAGVTDQPFRQLCRQLGAGLVVSEMVTSDMSLWNSRKSRLRMIHAGDPEPRSVQIAGGDAQMMADAARANVELGAQIIDINMGCPAKKVCNKAAGSALLKDEQLVNDILQAVVAAVDVPVTLKIRTGWDRDNRNGLTVAKIAEQAGIQALAVHGRTRADLYTGEAEYDTIAMIKQAVSIPVFANGDIDSPEKARHVLQATGADGLLIGRAAQGRPWIFREIEHYLLTGKTLPALQSSEVERILLEHLAALHVFYGDVMGVRIARKHVGWYLATLPGAREFRALFNRLEDTEAQCANVREFFSQGCKGPDNQNDKEVAA</sequence>
<gene>
    <name evidence="1" type="primary">dusB</name>
    <name type="ordered locus">PSPTO_4864</name>
</gene>
<evidence type="ECO:0000255" key="1">
    <source>
        <dbReference type="HAMAP-Rule" id="MF_02042"/>
    </source>
</evidence>
<organism>
    <name type="scientific">Pseudomonas syringae pv. tomato (strain ATCC BAA-871 / DC3000)</name>
    <dbReference type="NCBI Taxonomy" id="223283"/>
    <lineage>
        <taxon>Bacteria</taxon>
        <taxon>Pseudomonadati</taxon>
        <taxon>Pseudomonadota</taxon>
        <taxon>Gammaproteobacteria</taxon>
        <taxon>Pseudomonadales</taxon>
        <taxon>Pseudomonadaceae</taxon>
        <taxon>Pseudomonas</taxon>
    </lineage>
</organism>
<keyword id="KW-0285">Flavoprotein</keyword>
<keyword id="KW-0288">FMN</keyword>
<keyword id="KW-0521">NADP</keyword>
<keyword id="KW-0560">Oxidoreductase</keyword>
<keyword id="KW-1185">Reference proteome</keyword>
<keyword id="KW-0694">RNA-binding</keyword>
<keyword id="KW-0819">tRNA processing</keyword>
<keyword id="KW-0820">tRNA-binding</keyword>
<proteinExistence type="inferred from homology"/>
<comment type="function">
    <text evidence="1">Catalyzes the synthesis of 5,6-dihydrouridine (D), a modified base found in the D-loop of most tRNAs, via the reduction of the C5-C6 double bond in target uridines.</text>
</comment>
<comment type="catalytic activity">
    <reaction evidence="1">
        <text>a 5,6-dihydrouridine in tRNA + NAD(+) = a uridine in tRNA + NADH + H(+)</text>
        <dbReference type="Rhea" id="RHEA:54452"/>
        <dbReference type="Rhea" id="RHEA-COMP:13339"/>
        <dbReference type="Rhea" id="RHEA-COMP:13887"/>
        <dbReference type="ChEBI" id="CHEBI:15378"/>
        <dbReference type="ChEBI" id="CHEBI:57540"/>
        <dbReference type="ChEBI" id="CHEBI:57945"/>
        <dbReference type="ChEBI" id="CHEBI:65315"/>
        <dbReference type="ChEBI" id="CHEBI:74443"/>
    </reaction>
</comment>
<comment type="catalytic activity">
    <reaction evidence="1">
        <text>a 5,6-dihydrouridine in tRNA + NADP(+) = a uridine in tRNA + NADPH + H(+)</text>
        <dbReference type="Rhea" id="RHEA:23624"/>
        <dbReference type="Rhea" id="RHEA-COMP:13339"/>
        <dbReference type="Rhea" id="RHEA-COMP:13887"/>
        <dbReference type="ChEBI" id="CHEBI:15378"/>
        <dbReference type="ChEBI" id="CHEBI:57783"/>
        <dbReference type="ChEBI" id="CHEBI:58349"/>
        <dbReference type="ChEBI" id="CHEBI:65315"/>
        <dbReference type="ChEBI" id="CHEBI:74443"/>
    </reaction>
</comment>
<comment type="cofactor">
    <cofactor evidence="1">
        <name>FMN</name>
        <dbReference type="ChEBI" id="CHEBI:58210"/>
    </cofactor>
</comment>
<comment type="similarity">
    <text evidence="1">Belongs to the Dus family. DusB subfamily.</text>
</comment>
<reference key="1">
    <citation type="journal article" date="2003" name="Proc. Natl. Acad. Sci. U.S.A.">
        <title>The complete genome sequence of the Arabidopsis and tomato pathogen Pseudomonas syringae pv. tomato DC3000.</title>
        <authorList>
            <person name="Buell C.R."/>
            <person name="Joardar V."/>
            <person name="Lindeberg M."/>
            <person name="Selengut J."/>
            <person name="Paulsen I.T."/>
            <person name="Gwinn M.L."/>
            <person name="Dodson R.J."/>
            <person name="DeBoy R.T."/>
            <person name="Durkin A.S."/>
            <person name="Kolonay J.F."/>
            <person name="Madupu R."/>
            <person name="Daugherty S.C."/>
            <person name="Brinkac L.M."/>
            <person name="Beanan M.J."/>
            <person name="Haft D.H."/>
            <person name="Nelson W.C."/>
            <person name="Davidsen T.M."/>
            <person name="Zafar N."/>
            <person name="Zhou L."/>
            <person name="Liu J."/>
            <person name="Yuan Q."/>
            <person name="Khouri H.M."/>
            <person name="Fedorova N.B."/>
            <person name="Tran B."/>
            <person name="Russell D."/>
            <person name="Berry K.J."/>
            <person name="Utterback T.R."/>
            <person name="Van Aken S.E."/>
            <person name="Feldblyum T.V."/>
            <person name="D'Ascenzo M."/>
            <person name="Deng W.-L."/>
            <person name="Ramos A.R."/>
            <person name="Alfano J.R."/>
            <person name="Cartinhour S."/>
            <person name="Chatterjee A.K."/>
            <person name="Delaney T.P."/>
            <person name="Lazarowitz S.G."/>
            <person name="Martin G.B."/>
            <person name="Schneider D.J."/>
            <person name="Tang X."/>
            <person name="Bender C.L."/>
            <person name="White O."/>
            <person name="Fraser C.M."/>
            <person name="Collmer A."/>
        </authorList>
    </citation>
    <scope>NUCLEOTIDE SEQUENCE [LARGE SCALE GENOMIC DNA]</scope>
    <source>
        <strain>ATCC BAA-871 / DC3000</strain>
    </source>
</reference>
<feature type="chain" id="PRO_0000162095" description="tRNA-dihydrouridine synthase B">
    <location>
        <begin position="1"/>
        <end position="337"/>
    </location>
</feature>
<feature type="active site" description="Proton donor" evidence="1">
    <location>
        <position position="103"/>
    </location>
</feature>
<feature type="binding site" evidence="1">
    <location>
        <begin position="19"/>
        <end position="21"/>
    </location>
    <ligand>
        <name>FMN</name>
        <dbReference type="ChEBI" id="CHEBI:58210"/>
    </ligand>
</feature>
<feature type="binding site" evidence="1">
    <location>
        <position position="73"/>
    </location>
    <ligand>
        <name>FMN</name>
        <dbReference type="ChEBI" id="CHEBI:58210"/>
    </ligand>
</feature>
<feature type="binding site" evidence="1">
    <location>
        <position position="142"/>
    </location>
    <ligand>
        <name>FMN</name>
        <dbReference type="ChEBI" id="CHEBI:58210"/>
    </ligand>
</feature>
<feature type="binding site" evidence="1">
    <location>
        <begin position="203"/>
        <end position="205"/>
    </location>
    <ligand>
        <name>FMN</name>
        <dbReference type="ChEBI" id="CHEBI:58210"/>
    </ligand>
</feature>
<feature type="binding site" evidence="1">
    <location>
        <begin position="227"/>
        <end position="228"/>
    </location>
    <ligand>
        <name>FMN</name>
        <dbReference type="ChEBI" id="CHEBI:58210"/>
    </ligand>
</feature>